<name>EF1A2_OSCTI</name>
<comment type="function">
    <text evidence="1">This protein promotes the GTP-dependent binding of aminoacyl-tRNA to the A-site of ribosomes during protein biosynthesis.</text>
</comment>
<comment type="subcellular location">
    <subcellularLocation>
        <location evidence="1">Cytoplasm</location>
    </subcellularLocation>
</comment>
<comment type="similarity">
    <text evidence="2">Belongs to the TRAFAC class translation factor GTPase superfamily. Classic translation factor GTPase family. EF-Tu/EF-1A subfamily.</text>
</comment>
<feature type="chain" id="PRO_0000303015" description="Elongation factor 1-alpha 2">
    <location>
        <begin position="1"/>
        <end position="459"/>
    </location>
</feature>
<feature type="domain" description="tr-type G">
    <location>
        <begin position="5"/>
        <end position="242"/>
    </location>
</feature>
<feature type="region of interest" description="G1" evidence="1">
    <location>
        <begin position="14"/>
        <end position="21"/>
    </location>
</feature>
<feature type="region of interest" description="G2" evidence="1">
    <location>
        <begin position="70"/>
        <end position="74"/>
    </location>
</feature>
<feature type="region of interest" description="G3" evidence="1">
    <location>
        <begin position="91"/>
        <end position="94"/>
    </location>
</feature>
<feature type="region of interest" description="G4" evidence="1">
    <location>
        <begin position="153"/>
        <end position="156"/>
    </location>
</feature>
<feature type="region of interest" description="G5" evidence="1">
    <location>
        <begin position="194"/>
        <end position="196"/>
    </location>
</feature>
<feature type="modified residue" description="5-glutamyl glycerylphosphorylethanolamine" evidence="1">
    <location>
        <position position="301"/>
    </location>
</feature>
<feature type="modified residue" description="5-glutamyl glycerylphosphorylethanolamine" evidence="1">
    <location>
        <position position="374"/>
    </location>
</feature>
<sequence length="459" mass="50079">MGKEKTHINIVVIGHVDSGKSTTTGHLIYKCGGIDKRTIEKFEKEAQEMGKGSFKYAWVLDKLKAERERGITIDIALWKFETAKFYVTIIDAPGHRDFIKNMITGTSQADCAVLVVACGTGEFEAGISKNGQTREHALLAQTLGVKQMIVACNKMDSTEPPFSEKRFEEIITEVKSFIKKIGYNPATIPFVPISGFNGDNMLEPSANMSWYKGWSVERKEGNASGKTLLEALDCIIPPQRPTDRPLRLPLQDVYKIGGIGTVPVGRVETGVIKPGMVVTFAPQNVTTEVKSVEMHHESLPEAQPGDNVGFNVKNVSVKDIRRGSVCSDSKNDPAKESKSFTAQVIVMNHPGQIGAGYTPVLDCHTAHIACKFAELKEKVDRRTGKKVEDPPKFLKSGDAGIVELIPTKPLCVEAFTDYAPLGRFAVRDMRQTVAVGVIKGVTKDDGSGGKVTKSAAKKK</sequence>
<gene>
    <name type="primary">eft-2</name>
</gene>
<organism>
    <name type="scientific">Oscheius tipulae</name>
    <dbReference type="NCBI Taxonomy" id="141969"/>
    <lineage>
        <taxon>Eukaryota</taxon>
        <taxon>Metazoa</taxon>
        <taxon>Ecdysozoa</taxon>
        <taxon>Nematoda</taxon>
        <taxon>Chromadorea</taxon>
        <taxon>Rhabditida</taxon>
        <taxon>Rhabditina</taxon>
        <taxon>Rhabditomorpha</taxon>
        <taxon>Rhabditoidea</taxon>
        <taxon>Rhabditidae</taxon>
        <taxon>Rhabditinae</taxon>
        <taxon>Oscheius</taxon>
    </lineage>
</organism>
<accession>Q2HJN8</accession>
<evidence type="ECO:0000250" key="1"/>
<evidence type="ECO:0000305" key="2"/>
<protein>
    <recommendedName>
        <fullName>Elongation factor 1-alpha 2</fullName>
        <shortName>EF-1-alpha-2</shortName>
    </recommendedName>
</protein>
<keyword id="KW-0963">Cytoplasm</keyword>
<keyword id="KW-0251">Elongation factor</keyword>
<keyword id="KW-0342">GTP-binding</keyword>
<keyword id="KW-0547">Nucleotide-binding</keyword>
<keyword id="KW-0597">Phosphoprotein</keyword>
<keyword id="KW-0648">Protein biosynthesis</keyword>
<dbReference type="EMBL" id="AY928338">
    <property type="protein sequence ID" value="AAY17222.1"/>
    <property type="molecule type" value="Genomic_DNA"/>
</dbReference>
<dbReference type="SMR" id="Q2HJN8"/>
<dbReference type="GO" id="GO:0005737">
    <property type="term" value="C:cytoplasm"/>
    <property type="evidence" value="ECO:0007669"/>
    <property type="project" value="UniProtKB-SubCell"/>
</dbReference>
<dbReference type="GO" id="GO:0005525">
    <property type="term" value="F:GTP binding"/>
    <property type="evidence" value="ECO:0007669"/>
    <property type="project" value="UniProtKB-KW"/>
</dbReference>
<dbReference type="GO" id="GO:0003924">
    <property type="term" value="F:GTPase activity"/>
    <property type="evidence" value="ECO:0007669"/>
    <property type="project" value="InterPro"/>
</dbReference>
<dbReference type="GO" id="GO:0003746">
    <property type="term" value="F:translation elongation factor activity"/>
    <property type="evidence" value="ECO:0007669"/>
    <property type="project" value="UniProtKB-KW"/>
</dbReference>
<dbReference type="CDD" id="cd01883">
    <property type="entry name" value="EF1_alpha"/>
    <property type="match status" value="1"/>
</dbReference>
<dbReference type="CDD" id="cd03693">
    <property type="entry name" value="EF1_alpha_II"/>
    <property type="match status" value="1"/>
</dbReference>
<dbReference type="CDD" id="cd03705">
    <property type="entry name" value="EF1_alpha_III"/>
    <property type="match status" value="1"/>
</dbReference>
<dbReference type="FunFam" id="2.40.30.10:FF:000003">
    <property type="entry name" value="Elongation factor 1-alpha"/>
    <property type="match status" value="1"/>
</dbReference>
<dbReference type="FunFam" id="2.40.30.10:FF:000005">
    <property type="entry name" value="Elongation factor 1-alpha"/>
    <property type="match status" value="1"/>
</dbReference>
<dbReference type="FunFam" id="3.40.50.300:FF:000090">
    <property type="entry name" value="Elongation factor 1-alpha"/>
    <property type="match status" value="1"/>
</dbReference>
<dbReference type="Gene3D" id="3.40.50.300">
    <property type="entry name" value="P-loop containing nucleotide triphosphate hydrolases"/>
    <property type="match status" value="1"/>
</dbReference>
<dbReference type="Gene3D" id="2.40.30.10">
    <property type="entry name" value="Translation factors"/>
    <property type="match status" value="2"/>
</dbReference>
<dbReference type="HAMAP" id="MF_00118_A">
    <property type="entry name" value="EF_Tu_A"/>
    <property type="match status" value="1"/>
</dbReference>
<dbReference type="InterPro" id="IPR004161">
    <property type="entry name" value="EFTu-like_2"/>
</dbReference>
<dbReference type="InterPro" id="IPR031157">
    <property type="entry name" value="G_TR_CS"/>
</dbReference>
<dbReference type="InterPro" id="IPR054696">
    <property type="entry name" value="GTP-eEF1A_C"/>
</dbReference>
<dbReference type="InterPro" id="IPR027417">
    <property type="entry name" value="P-loop_NTPase"/>
</dbReference>
<dbReference type="InterPro" id="IPR000795">
    <property type="entry name" value="T_Tr_GTP-bd_dom"/>
</dbReference>
<dbReference type="InterPro" id="IPR050100">
    <property type="entry name" value="TRAFAC_GTPase_members"/>
</dbReference>
<dbReference type="InterPro" id="IPR009000">
    <property type="entry name" value="Transl_B-barrel_sf"/>
</dbReference>
<dbReference type="InterPro" id="IPR009001">
    <property type="entry name" value="Transl_elong_EF1A/Init_IF2_C"/>
</dbReference>
<dbReference type="InterPro" id="IPR004539">
    <property type="entry name" value="Transl_elong_EF1A_euk/arc"/>
</dbReference>
<dbReference type="NCBIfam" id="TIGR00483">
    <property type="entry name" value="EF-1_alpha"/>
    <property type="match status" value="1"/>
</dbReference>
<dbReference type="NCBIfam" id="NF008969">
    <property type="entry name" value="PRK12317.1"/>
    <property type="match status" value="1"/>
</dbReference>
<dbReference type="PANTHER" id="PTHR23115">
    <property type="entry name" value="TRANSLATION FACTOR"/>
    <property type="match status" value="1"/>
</dbReference>
<dbReference type="Pfam" id="PF22594">
    <property type="entry name" value="GTP-eEF1A_C"/>
    <property type="match status" value="1"/>
</dbReference>
<dbReference type="Pfam" id="PF00009">
    <property type="entry name" value="GTP_EFTU"/>
    <property type="match status" value="1"/>
</dbReference>
<dbReference type="Pfam" id="PF03144">
    <property type="entry name" value="GTP_EFTU_D2"/>
    <property type="match status" value="1"/>
</dbReference>
<dbReference type="PRINTS" id="PR00315">
    <property type="entry name" value="ELONGATNFCT"/>
</dbReference>
<dbReference type="SUPFAM" id="SSF50465">
    <property type="entry name" value="EF-Tu/eEF-1alpha/eIF2-gamma C-terminal domain"/>
    <property type="match status" value="1"/>
</dbReference>
<dbReference type="SUPFAM" id="SSF52540">
    <property type="entry name" value="P-loop containing nucleoside triphosphate hydrolases"/>
    <property type="match status" value="1"/>
</dbReference>
<dbReference type="SUPFAM" id="SSF50447">
    <property type="entry name" value="Translation proteins"/>
    <property type="match status" value="1"/>
</dbReference>
<dbReference type="PROSITE" id="PS00301">
    <property type="entry name" value="G_TR_1"/>
    <property type="match status" value="1"/>
</dbReference>
<dbReference type="PROSITE" id="PS51722">
    <property type="entry name" value="G_TR_2"/>
    <property type="match status" value="1"/>
</dbReference>
<reference key="1">
    <citation type="submission" date="2005-02" db="EMBL/GenBank/DDBJ databases">
        <title>Four eEF1A genes from a Rhabditid nematode.</title>
        <authorList>
            <person name="Akamine R.N."/>
            <person name="Winter C.E."/>
        </authorList>
    </citation>
    <scope>NUCLEOTIDE SEQUENCE [GENOMIC DNA]</scope>
    <source>
        <strain>CEW1</strain>
    </source>
</reference>
<proteinExistence type="inferred from homology"/>